<keyword id="KW-0131">Cell cycle</keyword>
<keyword id="KW-0158">Chromosome</keyword>
<keyword id="KW-0227">DNA damage</keyword>
<keyword id="KW-0234">DNA repair</keyword>
<keyword id="KW-0539">Nucleus</keyword>
<keyword id="KW-1185">Reference proteome</keyword>
<sequence>MVWALTPVDTVRGAQRCYIFAAGTYKVGRKDCDVIVQTDTSISRVHAEIVVEKMVAWDPQSGAPANPSYVRVVDRSKYGTFFNKVQGTQGSRLHKDEDAMLADGDTVTFGTGSATFRLSFVPIVVFFHGKKSGRISPSLQAVMTSIGAYATRKWSDECTHVLVDESCSLTPELLDAVLAKKQIVLGDWFKVMAEKNIHTAMPSSTQYIPKLTLDGMEIQVVEIKLIESCLAGYTFILGSSEKYKFGDKLHALLESTGAKYLHVDEFCANSQDSGAGENDKDILLVPAKSPLEFSKISGLFPLSKITDVKLFAAILSGHLEATAIEPPAYIVASSNSTDETIVVDSDVEIDTATSDHTVAASKSEHHIEHISDDKKEVVAISEEDAVNLVEAKTSINLHSYQEKDEIVKPMEEDVKVIEKTATMRGFKVEGEDIPVMTKVPKDETLDSRDETCHVIYTQNLVVKSILQSARAESIETGGINFKRFRKRGAVSGNSFKDLIPYSREPYRESDYKRGTVIDFMREEKKRRQMEAIAEDLFNNAKPKKKAAAGSSIHTMLTGRR</sequence>
<protein>
    <recommendedName>
        <fullName evidence="6">Nibrin homolog</fullName>
    </recommendedName>
    <alternativeName>
        <fullName>Nijmegen breakage syndrome 1 protein</fullName>
        <shortName>OsNbs1</shortName>
    </alternativeName>
</protein>
<dbReference type="EMBL" id="CM000135">
    <property type="protein sequence ID" value="EEC67210.1"/>
    <property type="molecule type" value="Genomic_DNA"/>
</dbReference>
<dbReference type="EMBL" id="FJ475131">
    <property type="protein sequence ID" value="ACK43220.1"/>
    <property type="molecule type" value="mRNA"/>
</dbReference>
<dbReference type="STRING" id="39946.B8BHK8"/>
<dbReference type="EnsemblPlants" id="BGIOSGA033164-TA">
    <property type="protein sequence ID" value="BGIOSGA033164-PA"/>
    <property type="gene ID" value="BGIOSGA033164"/>
</dbReference>
<dbReference type="Gramene" id="BGIOSGA033164-TA">
    <property type="protein sequence ID" value="BGIOSGA033164-PA"/>
    <property type="gene ID" value="BGIOSGA033164"/>
</dbReference>
<dbReference type="HOGENOM" id="CLU_036857_0_0_1"/>
<dbReference type="OMA" id="RDETCHV"/>
<dbReference type="Proteomes" id="UP000007015">
    <property type="component" value="Chromosome 10"/>
</dbReference>
<dbReference type="GO" id="GO:0005694">
    <property type="term" value="C:chromosome"/>
    <property type="evidence" value="ECO:0007669"/>
    <property type="project" value="UniProtKB-SubCell"/>
</dbReference>
<dbReference type="GO" id="GO:0030870">
    <property type="term" value="C:Mre11 complex"/>
    <property type="evidence" value="ECO:0007669"/>
    <property type="project" value="InterPro"/>
</dbReference>
<dbReference type="GO" id="GO:0003684">
    <property type="term" value="F:damaged DNA binding"/>
    <property type="evidence" value="ECO:0007669"/>
    <property type="project" value="TreeGrafter"/>
</dbReference>
<dbReference type="GO" id="GO:0071479">
    <property type="term" value="P:cellular response to ionizing radiation"/>
    <property type="evidence" value="ECO:0000250"/>
    <property type="project" value="UniProtKB"/>
</dbReference>
<dbReference type="GO" id="GO:0006974">
    <property type="term" value="P:DNA damage response"/>
    <property type="evidence" value="ECO:0000250"/>
    <property type="project" value="UniProtKB"/>
</dbReference>
<dbReference type="GO" id="GO:0000724">
    <property type="term" value="P:double-strand break repair via homologous recombination"/>
    <property type="evidence" value="ECO:0000250"/>
    <property type="project" value="UniProtKB"/>
</dbReference>
<dbReference type="GO" id="GO:0007095">
    <property type="term" value="P:mitotic G2 DNA damage checkpoint signaling"/>
    <property type="evidence" value="ECO:0007669"/>
    <property type="project" value="InterPro"/>
</dbReference>
<dbReference type="GO" id="GO:0006312">
    <property type="term" value="P:mitotic recombination"/>
    <property type="evidence" value="ECO:0000250"/>
    <property type="project" value="UniProtKB"/>
</dbReference>
<dbReference type="GO" id="GO:0007131">
    <property type="term" value="P:reciprocal meiotic recombination"/>
    <property type="evidence" value="ECO:0000250"/>
    <property type="project" value="UniProtKB"/>
</dbReference>
<dbReference type="CDD" id="cd22667">
    <property type="entry name" value="FHA_NBN"/>
    <property type="match status" value="1"/>
</dbReference>
<dbReference type="FunFam" id="2.60.200.20:FF:000051">
    <property type="entry name" value="Nijmegen breakage syndrome 1 protein"/>
    <property type="match status" value="1"/>
</dbReference>
<dbReference type="FunFam" id="3.40.50.10190:FF:000075">
    <property type="entry name" value="Nijmegen breakage syndrome 1 protein"/>
    <property type="match status" value="1"/>
</dbReference>
<dbReference type="Gene3D" id="2.60.200.20">
    <property type="match status" value="1"/>
</dbReference>
<dbReference type="Gene3D" id="3.40.50.10190">
    <property type="entry name" value="BRCT domain"/>
    <property type="match status" value="1"/>
</dbReference>
<dbReference type="InterPro" id="IPR036420">
    <property type="entry name" value="BRCT_dom_sf"/>
</dbReference>
<dbReference type="InterPro" id="IPR000253">
    <property type="entry name" value="FHA_dom"/>
</dbReference>
<dbReference type="InterPro" id="IPR040227">
    <property type="entry name" value="Nibrin-rel"/>
</dbReference>
<dbReference type="InterPro" id="IPR008984">
    <property type="entry name" value="SMAD_FHA_dom_sf"/>
</dbReference>
<dbReference type="PANTHER" id="PTHR12162:SF0">
    <property type="entry name" value="NIBRIN"/>
    <property type="match status" value="1"/>
</dbReference>
<dbReference type="PANTHER" id="PTHR12162">
    <property type="entry name" value="NIBRIN-RELATED"/>
    <property type="match status" value="1"/>
</dbReference>
<dbReference type="Pfam" id="PF00498">
    <property type="entry name" value="FHA"/>
    <property type="match status" value="1"/>
</dbReference>
<dbReference type="SUPFAM" id="SSF52113">
    <property type="entry name" value="BRCT domain"/>
    <property type="match status" value="1"/>
</dbReference>
<dbReference type="SUPFAM" id="SSF49879">
    <property type="entry name" value="SMAD/FHA domain"/>
    <property type="match status" value="1"/>
</dbReference>
<dbReference type="PROSITE" id="PS50006">
    <property type="entry name" value="FHA_DOMAIN"/>
    <property type="match status" value="1"/>
</dbReference>
<feature type="chain" id="PRO_0000430946" description="Nibrin homolog">
    <location>
        <begin position="1"/>
        <end position="560"/>
    </location>
</feature>
<feature type="domain" description="FHA" evidence="4">
    <location>
        <begin position="25"/>
        <end position="87"/>
    </location>
</feature>
<feature type="domain" description="BRCT" evidence="3">
    <location>
        <begin position="115"/>
        <end position="190"/>
    </location>
</feature>
<feature type="short sequence motif" description="Nuclear localization signal" evidence="5">
    <location>
        <begin position="511"/>
        <end position="518"/>
    </location>
</feature>
<feature type="sequence conflict" description="In Ref. 2; ACK43220." ref="2">
    <original>S</original>
    <variation>N</variation>
    <location>
        <position position="113"/>
    </location>
</feature>
<feature type="sequence conflict" description="In Ref. 2; ACK43220." ref="2">
    <original>S</original>
    <variation>C</variation>
    <location>
        <position position="138"/>
    </location>
</feature>
<feature type="sequence conflict" description="In Ref. 2; ACK43220." ref="2">
    <original>A</original>
    <variation>E</variation>
    <location>
        <position position="200"/>
    </location>
</feature>
<feature type="sequence conflict" description="In Ref. 2; ACK43220." ref="2">
    <original>S</original>
    <variation>R</variation>
    <location>
        <position position="297"/>
    </location>
</feature>
<feature type="sequence conflict" description="In Ref. 2; ACK43220." ref="2">
    <original>Y</original>
    <variation>D</variation>
    <location>
        <position position="400"/>
    </location>
</feature>
<feature type="sequence conflict" description="In Ref. 2; ACK43220." ref="2">
    <original>K</original>
    <variation>E</variation>
    <location>
        <position position="512"/>
    </location>
</feature>
<feature type="sequence conflict" description="In Ref. 2; ACK43220." ref="2">
    <original>I</original>
    <variation>T</variation>
    <location>
        <position position="517"/>
    </location>
</feature>
<evidence type="ECO:0000250" key="1">
    <source>
        <dbReference type="UniProtKB" id="O60934"/>
    </source>
</evidence>
<evidence type="ECO:0000250" key="2">
    <source>
        <dbReference type="UniProtKB" id="Q0H8D7"/>
    </source>
</evidence>
<evidence type="ECO:0000255" key="3">
    <source>
        <dbReference type="PROSITE-ProRule" id="PRU00033"/>
    </source>
</evidence>
<evidence type="ECO:0000255" key="4">
    <source>
        <dbReference type="PROSITE-ProRule" id="PRU00086"/>
    </source>
</evidence>
<evidence type="ECO:0000255" key="5">
    <source>
        <dbReference type="PROSITE-ProRule" id="PRU00768"/>
    </source>
</evidence>
<evidence type="ECO:0000305" key="6"/>
<evidence type="ECO:0000312" key="7">
    <source>
        <dbReference type="EMBL" id="EEC67210.1"/>
    </source>
</evidence>
<accession>B8BHK8</accession>
<accession>B7UCQ8</accession>
<gene>
    <name evidence="6" type="primary">NBS1</name>
    <name evidence="7" type="ORF">OsI_34099</name>
</gene>
<name>NBS1_ORYSI</name>
<comment type="function">
    <text evidence="1 2">Component of the MRN complex, which plays a central role in double-strand break (DSB) repair, DNA recombination, maintenance of telomere integrity and meiosis. The MRN complex is involved in the repair of DNA double-strand breaks (DSBs) via homologous recombination (HR), an error-free mechanism which primarily occurs during S and G2 phases (By similarity). The complex (1) mediates the end resection of damaged DNA, which generates proper single-stranded DNA, a key initial steps in HR, and is (2) required for the recruitment of other repair factors and efficient activation of ATM and ATR upon DNA damage. The MRN complex possesses single-strand endonuclease activity and double-strand-specific 3'-5' exonuclease activity, which are provided by MRE11, to initiate end resection, which is required for single-strand invasion and recombination. Within the MRN complex, NBS1 acts as a protein-protein adapter, which specifically recognizes and binds phosphorylated proteins, promoting their recruitment to DNA damage sites. Recruits MRE11 and RAD50 components of the MRN complex to DSBs in response to DNA damage (By similarity).</text>
</comment>
<comment type="subunit">
    <text evidence="2">Component of the MRN complex composed of two heterodimers RAD50 and MRE11 associated with a single NBS1.</text>
</comment>
<comment type="subcellular location">
    <subcellularLocation>
        <location evidence="1">Nucleus</location>
    </subcellularLocation>
    <subcellularLocation>
        <location evidence="1">Chromosome</location>
    </subcellularLocation>
    <text evidence="1">Localizes to DNA double-strand breaks (DSBs).</text>
</comment>
<comment type="domain">
    <text evidence="1">The FHA and BRCT domains are likely to have a crucial role for both binding to histone H2AFX and for relocalization of MRE11/RAD50 complex to the vicinity of DNA damage.</text>
</comment>
<comment type="similarity">
    <text evidence="6">Belongs to the Nibrin family.</text>
</comment>
<proteinExistence type="evidence at transcript level"/>
<reference key="1">
    <citation type="journal article" date="2005" name="PLoS Biol.">
        <title>The genomes of Oryza sativa: a history of duplications.</title>
        <authorList>
            <person name="Yu J."/>
            <person name="Wang J."/>
            <person name="Lin W."/>
            <person name="Li S."/>
            <person name="Li H."/>
            <person name="Zhou J."/>
            <person name="Ni P."/>
            <person name="Dong W."/>
            <person name="Hu S."/>
            <person name="Zeng C."/>
            <person name="Zhang J."/>
            <person name="Zhang Y."/>
            <person name="Li R."/>
            <person name="Xu Z."/>
            <person name="Li S."/>
            <person name="Li X."/>
            <person name="Zheng H."/>
            <person name="Cong L."/>
            <person name="Lin L."/>
            <person name="Yin J."/>
            <person name="Geng J."/>
            <person name="Li G."/>
            <person name="Shi J."/>
            <person name="Liu J."/>
            <person name="Lv H."/>
            <person name="Li J."/>
            <person name="Wang J."/>
            <person name="Deng Y."/>
            <person name="Ran L."/>
            <person name="Shi X."/>
            <person name="Wang X."/>
            <person name="Wu Q."/>
            <person name="Li C."/>
            <person name="Ren X."/>
            <person name="Wang J."/>
            <person name="Wang X."/>
            <person name="Li D."/>
            <person name="Liu D."/>
            <person name="Zhang X."/>
            <person name="Ji Z."/>
            <person name="Zhao W."/>
            <person name="Sun Y."/>
            <person name="Zhang Z."/>
            <person name="Bao J."/>
            <person name="Han Y."/>
            <person name="Dong L."/>
            <person name="Ji J."/>
            <person name="Chen P."/>
            <person name="Wu S."/>
            <person name="Liu J."/>
            <person name="Xiao Y."/>
            <person name="Bu D."/>
            <person name="Tan J."/>
            <person name="Yang L."/>
            <person name="Ye C."/>
            <person name="Zhang J."/>
            <person name="Xu J."/>
            <person name="Zhou Y."/>
            <person name="Yu Y."/>
            <person name="Zhang B."/>
            <person name="Zhuang S."/>
            <person name="Wei H."/>
            <person name="Liu B."/>
            <person name="Lei M."/>
            <person name="Yu H."/>
            <person name="Li Y."/>
            <person name="Xu H."/>
            <person name="Wei S."/>
            <person name="He X."/>
            <person name="Fang L."/>
            <person name="Zhang Z."/>
            <person name="Zhang Y."/>
            <person name="Huang X."/>
            <person name="Su Z."/>
            <person name="Tong W."/>
            <person name="Li J."/>
            <person name="Tong Z."/>
            <person name="Li S."/>
            <person name="Ye J."/>
            <person name="Wang L."/>
            <person name="Fang L."/>
            <person name="Lei T."/>
            <person name="Chen C.-S."/>
            <person name="Chen H.-C."/>
            <person name="Xu Z."/>
            <person name="Li H."/>
            <person name="Huang H."/>
            <person name="Zhang F."/>
            <person name="Xu H."/>
            <person name="Li N."/>
            <person name="Zhao C."/>
            <person name="Li S."/>
            <person name="Dong L."/>
            <person name="Huang Y."/>
            <person name="Li L."/>
            <person name="Xi Y."/>
            <person name="Qi Q."/>
            <person name="Li W."/>
            <person name="Zhang B."/>
            <person name="Hu W."/>
            <person name="Zhang Y."/>
            <person name="Tian X."/>
            <person name="Jiao Y."/>
            <person name="Liang X."/>
            <person name="Jin J."/>
            <person name="Gao L."/>
            <person name="Zheng W."/>
            <person name="Hao B."/>
            <person name="Liu S.-M."/>
            <person name="Wang W."/>
            <person name="Yuan L."/>
            <person name="Cao M."/>
            <person name="McDermott J."/>
            <person name="Samudrala R."/>
            <person name="Wang J."/>
            <person name="Wong G.K.-S."/>
            <person name="Yang H."/>
        </authorList>
    </citation>
    <scope>NUCLEOTIDE SEQUENCE [LARGE SCALE GENOMIC DNA]</scope>
    <source>
        <strain>cv. 93-11</strain>
    </source>
</reference>
<reference key="2">
    <citation type="submission" date="2008-11" db="EMBL/GenBank/DDBJ databases">
        <title>Characterization of NBS1-like protein from Oryza sativa.</title>
        <authorList>
            <person name="Rajanikant C."/>
            <person name="Sainis J.K."/>
        </authorList>
    </citation>
    <scope>NUCLEOTIDE SEQUENCE [MRNA] OF 1-536</scope>
</reference>
<organism evidence="7">
    <name type="scientific">Oryza sativa subsp. indica</name>
    <name type="common">Rice</name>
    <dbReference type="NCBI Taxonomy" id="39946"/>
    <lineage>
        <taxon>Eukaryota</taxon>
        <taxon>Viridiplantae</taxon>
        <taxon>Streptophyta</taxon>
        <taxon>Embryophyta</taxon>
        <taxon>Tracheophyta</taxon>
        <taxon>Spermatophyta</taxon>
        <taxon>Magnoliopsida</taxon>
        <taxon>Liliopsida</taxon>
        <taxon>Poales</taxon>
        <taxon>Poaceae</taxon>
        <taxon>BOP clade</taxon>
        <taxon>Oryzoideae</taxon>
        <taxon>Oryzeae</taxon>
        <taxon>Oryzinae</taxon>
        <taxon>Oryza</taxon>
        <taxon>Oryza sativa</taxon>
    </lineage>
</organism>